<keyword id="KW-0929">Antimicrobial</keyword>
<keyword id="KW-1015">Disulfide bond</keyword>
<keyword id="KW-0295">Fungicide</keyword>
<keyword id="KW-0611">Plant defense</keyword>
<keyword id="KW-1185">Reference proteome</keyword>
<keyword id="KW-0964">Secreted</keyword>
<keyword id="KW-0732">Signal</keyword>
<name>DF296_ARATH</name>
<reference key="1">
    <citation type="journal article" date="1999" name="Nature">
        <title>Sequence and analysis of chromosome 2 of the plant Arabidopsis thaliana.</title>
        <authorList>
            <person name="Lin X."/>
            <person name="Kaul S."/>
            <person name="Rounsley S.D."/>
            <person name="Shea T.P."/>
            <person name="Benito M.-I."/>
            <person name="Town C.D."/>
            <person name="Fujii C.Y."/>
            <person name="Mason T.M."/>
            <person name="Bowman C.L."/>
            <person name="Barnstead M.E."/>
            <person name="Feldblyum T.V."/>
            <person name="Buell C.R."/>
            <person name="Ketchum K.A."/>
            <person name="Lee J.J."/>
            <person name="Ronning C.M."/>
            <person name="Koo H.L."/>
            <person name="Moffat K.S."/>
            <person name="Cronin L.A."/>
            <person name="Shen M."/>
            <person name="Pai G."/>
            <person name="Van Aken S."/>
            <person name="Umayam L."/>
            <person name="Tallon L.J."/>
            <person name="Gill J.E."/>
            <person name="Adams M.D."/>
            <person name="Carrera A.J."/>
            <person name="Creasy T.H."/>
            <person name="Goodman H.M."/>
            <person name="Somerville C.R."/>
            <person name="Copenhaver G.P."/>
            <person name="Preuss D."/>
            <person name="Nierman W.C."/>
            <person name="White O."/>
            <person name="Eisen J.A."/>
            <person name="Salzberg S.L."/>
            <person name="Fraser C.M."/>
            <person name="Venter J.C."/>
        </authorList>
    </citation>
    <scope>NUCLEOTIDE SEQUENCE [LARGE SCALE GENOMIC DNA]</scope>
    <source>
        <strain>cv. Columbia</strain>
    </source>
</reference>
<reference key="2">
    <citation type="journal article" date="2017" name="Plant J.">
        <title>Araport11: a complete reannotation of the Arabidopsis thaliana reference genome.</title>
        <authorList>
            <person name="Cheng C.Y."/>
            <person name="Krishnakumar V."/>
            <person name="Chan A.P."/>
            <person name="Thibaud-Nissen F."/>
            <person name="Schobel S."/>
            <person name="Town C.D."/>
        </authorList>
    </citation>
    <scope>GENOME REANNOTATION</scope>
    <source>
        <strain>cv. Columbia</strain>
    </source>
</reference>
<reference key="3">
    <citation type="journal article" date="2005" name="Plant Physiol.">
        <title>Genome organization of more than 300 defensin-like genes in Arabidopsis.</title>
        <authorList>
            <person name="Silverstein K.A.T."/>
            <person name="Graham M.A."/>
            <person name="Paape T.D."/>
            <person name="VandenBosch K.A."/>
        </authorList>
    </citation>
    <scope>NUCLEOTIDE SEQUENCE [MRNA] OF 2-101</scope>
    <scope>GENE FAMILY</scope>
</reference>
<evidence type="ECO:0000250" key="1"/>
<evidence type="ECO:0000255" key="2"/>
<evidence type="ECO:0000305" key="3"/>
<organism>
    <name type="scientific">Arabidopsis thaliana</name>
    <name type="common">Mouse-ear cress</name>
    <dbReference type="NCBI Taxonomy" id="3702"/>
    <lineage>
        <taxon>Eukaryota</taxon>
        <taxon>Viridiplantae</taxon>
        <taxon>Streptophyta</taxon>
        <taxon>Embryophyta</taxon>
        <taxon>Tracheophyta</taxon>
        <taxon>Spermatophyta</taxon>
        <taxon>Magnoliopsida</taxon>
        <taxon>eudicotyledons</taxon>
        <taxon>Gunneridae</taxon>
        <taxon>Pentapetalae</taxon>
        <taxon>rosids</taxon>
        <taxon>malvids</taxon>
        <taxon>Brassicales</taxon>
        <taxon>Brassicaceae</taxon>
        <taxon>Camelineae</taxon>
        <taxon>Arabidopsis</taxon>
    </lineage>
</organism>
<gene>
    <name type="ordered locus">At2g04046</name>
    <name type="ORF">F3L12</name>
</gene>
<sequence>MASKITIFFVLALVVVCTMMVCIPTATAELVLPCKTTYDCVNLPCLGRPPLCINGQCKCTTTLTHQAKLDNLRTMNDAKTCKYTSDCDPRMRYSCVSGSYICLNGFCTCT</sequence>
<feature type="signal peptide" evidence="2">
    <location>
        <begin position="1"/>
        <end position="28"/>
    </location>
</feature>
<feature type="chain" id="PRO_0000379756" description="Defensin-like protein 296">
    <location>
        <begin position="29"/>
        <end position="110"/>
    </location>
</feature>
<feature type="disulfide bond" evidence="1">
    <location>
        <begin position="34"/>
        <end position="52"/>
    </location>
</feature>
<feature type="disulfide bond" evidence="1">
    <location>
        <begin position="40"/>
        <end position="57"/>
    </location>
</feature>
<feature type="disulfide bond" evidence="1">
    <location>
        <begin position="45"/>
        <end position="59"/>
    </location>
</feature>
<feature type="disulfide bond" evidence="1">
    <location>
        <begin position="81"/>
        <end position="102"/>
    </location>
</feature>
<feature type="disulfide bond" evidence="1">
    <location>
        <begin position="87"/>
        <end position="107"/>
    </location>
</feature>
<feature type="disulfide bond" evidence="1">
    <location>
        <begin position="95"/>
        <end position="109"/>
    </location>
</feature>
<comment type="subcellular location">
    <subcellularLocation>
        <location evidence="1">Secreted</location>
    </subcellularLocation>
</comment>
<comment type="similarity">
    <text evidence="3">Belongs to the DEFL family.</text>
</comment>
<comment type="caution">
    <text evidence="3">Contains 6 disulfide bonds instead of the 4 disulfide bonds, which are conserved features of the family.</text>
</comment>
<proteinExistence type="inferred from homology"/>
<protein>
    <recommendedName>
        <fullName>Defensin-like protein 296</fullName>
    </recommendedName>
</protein>
<accession>Q4VNZ5</accession>
<dbReference type="EMBL" id="AC007178">
    <property type="status" value="NOT_ANNOTATED_CDS"/>
    <property type="molecule type" value="Genomic_DNA"/>
</dbReference>
<dbReference type="EMBL" id="CP002685">
    <property type="protein sequence ID" value="AEC05786.1"/>
    <property type="molecule type" value="Genomic_DNA"/>
</dbReference>
<dbReference type="EMBL" id="AY803267">
    <property type="protein sequence ID" value="AAX39308.1"/>
    <property type="molecule type" value="mRNA"/>
</dbReference>
<dbReference type="RefSeq" id="NP_001031317.1">
    <property type="nucleotide sequence ID" value="NM_001036240.2"/>
</dbReference>
<dbReference type="SMR" id="Q4VNZ5"/>
<dbReference type="PaxDb" id="3702-AT2G04046.1"/>
<dbReference type="EnsemblPlants" id="AT2G04046.1">
    <property type="protein sequence ID" value="AT2G04046.1"/>
    <property type="gene ID" value="AT2G04046"/>
</dbReference>
<dbReference type="GeneID" id="3768429"/>
<dbReference type="Gramene" id="AT2G04046.1">
    <property type="protein sequence ID" value="AT2G04046.1"/>
    <property type="gene ID" value="AT2G04046"/>
</dbReference>
<dbReference type="KEGG" id="ath:AT2G04046"/>
<dbReference type="Araport" id="AT2G04046"/>
<dbReference type="TAIR" id="AT2G04046"/>
<dbReference type="HOGENOM" id="CLU_172799_0_0_1"/>
<dbReference type="InParanoid" id="Q4VNZ5"/>
<dbReference type="OMA" id="MNDAKTC"/>
<dbReference type="OrthoDB" id="1027617at2759"/>
<dbReference type="PhylomeDB" id="Q4VNZ5"/>
<dbReference type="PRO" id="PR:Q4VNZ5"/>
<dbReference type="Proteomes" id="UP000006548">
    <property type="component" value="Chromosome 2"/>
</dbReference>
<dbReference type="ExpressionAtlas" id="Q4VNZ5">
    <property type="expression patterns" value="baseline and differential"/>
</dbReference>
<dbReference type="GO" id="GO:0005576">
    <property type="term" value="C:extracellular region"/>
    <property type="evidence" value="ECO:0007669"/>
    <property type="project" value="UniProtKB-SubCell"/>
</dbReference>
<dbReference type="GO" id="GO:0050832">
    <property type="term" value="P:defense response to fungus"/>
    <property type="evidence" value="ECO:0007669"/>
    <property type="project" value="UniProtKB-KW"/>
</dbReference>
<dbReference type="GO" id="GO:0031640">
    <property type="term" value="P:killing of cells of another organism"/>
    <property type="evidence" value="ECO:0007669"/>
    <property type="project" value="UniProtKB-KW"/>
</dbReference>